<reference key="1">
    <citation type="journal article" date="1998" name="Nature">
        <title>Deciphering the biology of Mycobacterium tuberculosis from the complete genome sequence.</title>
        <authorList>
            <person name="Cole S.T."/>
            <person name="Brosch R."/>
            <person name="Parkhill J."/>
            <person name="Garnier T."/>
            <person name="Churcher C.M."/>
            <person name="Harris D.E."/>
            <person name="Gordon S.V."/>
            <person name="Eiglmeier K."/>
            <person name="Gas S."/>
            <person name="Barry C.E. III"/>
            <person name="Tekaia F."/>
            <person name="Badcock K."/>
            <person name="Basham D."/>
            <person name="Brown D."/>
            <person name="Chillingworth T."/>
            <person name="Connor R."/>
            <person name="Davies R.M."/>
            <person name="Devlin K."/>
            <person name="Feltwell T."/>
            <person name="Gentles S."/>
            <person name="Hamlin N."/>
            <person name="Holroyd S."/>
            <person name="Hornsby T."/>
            <person name="Jagels K."/>
            <person name="Krogh A."/>
            <person name="McLean J."/>
            <person name="Moule S."/>
            <person name="Murphy L.D."/>
            <person name="Oliver S."/>
            <person name="Osborne J."/>
            <person name="Quail M.A."/>
            <person name="Rajandream M.A."/>
            <person name="Rogers J."/>
            <person name="Rutter S."/>
            <person name="Seeger K."/>
            <person name="Skelton S."/>
            <person name="Squares S."/>
            <person name="Squares R."/>
            <person name="Sulston J.E."/>
            <person name="Taylor K."/>
            <person name="Whitehead S."/>
            <person name="Barrell B.G."/>
        </authorList>
    </citation>
    <scope>NUCLEOTIDE SEQUENCE [LARGE SCALE GENOMIC DNA]</scope>
    <source>
        <strain>ATCC 25618 / H37Rv</strain>
    </source>
</reference>
<reference key="2">
    <citation type="journal article" date="2008" name="J. Biol. Chem.">
        <title>Biosynthesis and recycling of nicotinamide cofactors in mycobacterium tuberculosis. An essential role for NAD in nonreplicating bacilli.</title>
        <authorList>
            <person name="Boshoff H.I."/>
            <person name="Xu X."/>
            <person name="Tahlan K."/>
            <person name="Dowd C.S."/>
            <person name="Pethe K."/>
            <person name="Camacho L.R."/>
            <person name="Park T.H."/>
            <person name="Yun C.S."/>
            <person name="Schnappinger D."/>
            <person name="Ehrt S."/>
            <person name="Williams K.J."/>
            <person name="Barry C.E. III"/>
        </authorList>
    </citation>
    <scope>FUNCTION</scope>
    <scope>CATALYTIC ACTIVITY</scope>
    <scope>DISRUPTION PHENOTYPE</scope>
    <scope>SUBSTRATE SPECIFICITY</scope>
</reference>
<reference key="3">
    <citation type="journal article" date="2011" name="Mol. Cell. Proteomics">
        <title>Proteogenomic analysis of Mycobacterium tuberculosis by high resolution mass spectrometry.</title>
        <authorList>
            <person name="Kelkar D.S."/>
            <person name="Kumar D."/>
            <person name="Kumar P."/>
            <person name="Balakrishnan L."/>
            <person name="Muthusamy B."/>
            <person name="Yadav A.K."/>
            <person name="Shrivastava P."/>
            <person name="Marimuthu A."/>
            <person name="Anand S."/>
            <person name="Sundaram H."/>
            <person name="Kingsbury R."/>
            <person name="Harsha H.C."/>
            <person name="Nair B."/>
            <person name="Prasad T.S."/>
            <person name="Chauhan D.S."/>
            <person name="Katoch K."/>
            <person name="Katoch V.M."/>
            <person name="Kumar P."/>
            <person name="Chaerkady R."/>
            <person name="Ramachandran S."/>
            <person name="Dash D."/>
            <person name="Pandey A."/>
        </authorList>
    </citation>
    <scope>IDENTIFICATION BY MASS SPECTROMETRY [LARGE SCALE ANALYSIS]</scope>
    <source>
        <strain>ATCC 25618 / H37Rv</strain>
    </source>
</reference>
<proteinExistence type="evidence at protein level"/>
<sequence length="448" mass="47227">MGPPPAARRREGEPDNQDPAGLLTDKYELTMLAAALRDGSANRPTTFEVFARRLPTGRRYGVVAGTGRLLEALPQFRFDADACELLAQFLDPATVRYLREFRFRGDIDGYAEGELYFPGSPVLSVRGSFAECVLLETLVLSIFNHDTAIASAAARMVSAAGGRPLIEMGSRRTHERAAVAAARAAYIAGFAASSNLAAQRRYGVPAHGTAAHAFTMLHAQHGGPTELAERAAFRAQVEALGPGTTLLVDTYDVTTGVANAVAAAGAELGAIRIDSGELGVLARQAREQLDRLGATRTRIVVSGDLDEFSIAALRGEPVDSYGVGTSLVTGSGAPTANMVYKLVEVDGVPVQKRSSYKESPGGRKEALRRSRATGTITEELVHPAGRPPVIVEPHRVLTLPLVRAGQPVADTSLAAARQLVASGLRSLPGDGLKLAPGEPAIPTRTIPA</sequence>
<gene>
    <name type="primary">pncB1</name>
    <name type="ordered locus">Rv1330c</name>
    <name type="ORF">MTCY130.15c</name>
</gene>
<accession>P9WJI9</accession>
<accession>L0T9B3</accession>
<accession>Q10641</accession>
<name>PNCB1_MYCTU</name>
<keyword id="KW-0436">Ligase</keyword>
<keyword id="KW-0597">Phosphoprotein</keyword>
<keyword id="KW-0662">Pyridine nucleotide biosynthesis</keyword>
<keyword id="KW-1185">Reference proteome</keyword>
<keyword id="KW-0808">Transferase</keyword>
<organism>
    <name type="scientific">Mycobacterium tuberculosis (strain ATCC 25618 / H37Rv)</name>
    <dbReference type="NCBI Taxonomy" id="83332"/>
    <lineage>
        <taxon>Bacteria</taxon>
        <taxon>Bacillati</taxon>
        <taxon>Actinomycetota</taxon>
        <taxon>Actinomycetes</taxon>
        <taxon>Mycobacteriales</taxon>
        <taxon>Mycobacteriaceae</taxon>
        <taxon>Mycobacterium</taxon>
        <taxon>Mycobacterium tuberculosis complex</taxon>
    </lineage>
</organism>
<comment type="function">
    <text evidence="3">Involved in the Preiss-Handler pathway, which is a recycling route that permits the salvage of free nicotinamide (NM) and nicotinic acid (Na) involved in the NAD biosynthesis. Catalyzes the synthesis of beta-nicotinate D-ribonucleotide from nicotinate and 5-phospho-D-ribose 1-phosphate at the expense of ATP. It is not able to use nicotinamide. PncB1 contributes to basal NAD level.</text>
</comment>
<comment type="catalytic activity">
    <reaction evidence="3">
        <text>nicotinate + 5-phospho-alpha-D-ribose 1-diphosphate + ATP + H2O = nicotinate beta-D-ribonucleotide + ADP + phosphate + diphosphate</text>
        <dbReference type="Rhea" id="RHEA:36163"/>
        <dbReference type="ChEBI" id="CHEBI:15377"/>
        <dbReference type="ChEBI" id="CHEBI:30616"/>
        <dbReference type="ChEBI" id="CHEBI:32544"/>
        <dbReference type="ChEBI" id="CHEBI:33019"/>
        <dbReference type="ChEBI" id="CHEBI:43474"/>
        <dbReference type="ChEBI" id="CHEBI:57502"/>
        <dbReference type="ChEBI" id="CHEBI:58017"/>
        <dbReference type="ChEBI" id="CHEBI:456216"/>
        <dbReference type="EC" id="6.3.4.21"/>
    </reaction>
</comment>
<comment type="pathway">
    <text>Cofactor biosynthesis; NAD(+) biosynthesis; nicotinate D-ribonucleotide from nicotinate: step 1/1.</text>
</comment>
<comment type="PTM">
    <text evidence="1">Transiently phosphorylated on a His residue during the reaction cycle. Phosphorylation strongly increases the affinity for substrates and increases the rate of nicotinate D-ribonucleotide production. Dephosphorylation regenerates the low-affinity form of the enzyme, leading to product release.</text>
</comment>
<comment type="disruption phenotype">
    <text evidence="3">Cells lacking this gene show a reduced incorporation of nicotinamide. Double mutants lacking both pncB1 and pncB2 show an absence of incorporation of nicotinamide.</text>
</comment>
<comment type="similarity">
    <text evidence="4">Belongs to the NAPRTase family.</text>
</comment>
<feature type="chain" id="PRO_0000103804" description="Nicotinate phosphoribosyltransferase pncB1">
    <location>
        <begin position="1"/>
        <end position="448"/>
    </location>
</feature>
<feature type="region of interest" description="Disordered" evidence="2">
    <location>
        <begin position="1"/>
        <end position="21"/>
    </location>
</feature>
<feature type="region of interest" description="Disordered" evidence="2">
    <location>
        <begin position="353"/>
        <end position="372"/>
    </location>
</feature>
<feature type="modified residue" description="Phosphohistidine" evidence="1">
    <location>
        <position position="212"/>
    </location>
</feature>
<evidence type="ECO:0000250" key="1">
    <source>
        <dbReference type="UniProtKB" id="P22253"/>
    </source>
</evidence>
<evidence type="ECO:0000256" key="2">
    <source>
        <dbReference type="SAM" id="MobiDB-lite"/>
    </source>
</evidence>
<evidence type="ECO:0000269" key="3">
    <source>
    </source>
</evidence>
<evidence type="ECO:0000305" key="4"/>
<protein>
    <recommendedName>
        <fullName>Nicotinate phosphoribosyltransferase pncB1</fullName>
        <shortName>NAPRTase pncB1</shortName>
        <ecNumber>6.3.4.21</ecNumber>
    </recommendedName>
</protein>
<dbReference type="EC" id="6.3.4.21"/>
<dbReference type="EMBL" id="AL123456">
    <property type="protein sequence ID" value="CCP44088.1"/>
    <property type="molecule type" value="Genomic_DNA"/>
</dbReference>
<dbReference type="PIR" id="F70770">
    <property type="entry name" value="F70770"/>
</dbReference>
<dbReference type="RefSeq" id="NP_215846.2">
    <property type="nucleotide sequence ID" value="NC_000962.3"/>
</dbReference>
<dbReference type="RefSeq" id="WP_003911483.1">
    <property type="nucleotide sequence ID" value="NZ_NVQJ01000031.1"/>
</dbReference>
<dbReference type="SMR" id="P9WJI9"/>
<dbReference type="FunCoup" id="P9WJI9">
    <property type="interactions" value="133"/>
</dbReference>
<dbReference type="STRING" id="83332.Rv1330c"/>
<dbReference type="PaxDb" id="83332-Rv1330c"/>
<dbReference type="DNASU" id="886884"/>
<dbReference type="GeneID" id="886884"/>
<dbReference type="KEGG" id="mtu:Rv1330c"/>
<dbReference type="KEGG" id="mtv:RVBD_1330c"/>
<dbReference type="TubercuList" id="Rv1330c"/>
<dbReference type="eggNOG" id="COG1488">
    <property type="taxonomic scope" value="Bacteria"/>
</dbReference>
<dbReference type="InParanoid" id="P9WJI9"/>
<dbReference type="OrthoDB" id="9770610at2"/>
<dbReference type="PhylomeDB" id="P9WJI9"/>
<dbReference type="UniPathway" id="UPA00253">
    <property type="reaction ID" value="UER00457"/>
</dbReference>
<dbReference type="Proteomes" id="UP000001584">
    <property type="component" value="Chromosome"/>
</dbReference>
<dbReference type="GO" id="GO:0005829">
    <property type="term" value="C:cytosol"/>
    <property type="evidence" value="ECO:0000318"/>
    <property type="project" value="GO_Central"/>
</dbReference>
<dbReference type="GO" id="GO:0009274">
    <property type="term" value="C:peptidoglycan-based cell wall"/>
    <property type="evidence" value="ECO:0007005"/>
    <property type="project" value="MTBBASE"/>
</dbReference>
<dbReference type="GO" id="GO:0047280">
    <property type="term" value="F:nicotinamide phosphoribosyltransferase activity"/>
    <property type="evidence" value="ECO:0000314"/>
    <property type="project" value="MTBBASE"/>
</dbReference>
<dbReference type="GO" id="GO:0004516">
    <property type="term" value="F:nicotinate phosphoribosyltransferase activity"/>
    <property type="evidence" value="ECO:0000314"/>
    <property type="project" value="MTBBASE"/>
</dbReference>
<dbReference type="GO" id="GO:0009435">
    <property type="term" value="P:NAD biosynthetic process"/>
    <property type="evidence" value="ECO:0000315"/>
    <property type="project" value="MTBBASE"/>
</dbReference>
<dbReference type="GO" id="GO:0034355">
    <property type="term" value="P:NAD biosynthetic process via the salvage pathway"/>
    <property type="evidence" value="ECO:0000315"/>
    <property type="project" value="MTBBASE"/>
</dbReference>
<dbReference type="FunFam" id="3.20.20.70:FF:000076">
    <property type="entry name" value="Nicotinate phosphoribosyltransferase"/>
    <property type="match status" value="1"/>
</dbReference>
<dbReference type="Gene3D" id="3.20.20.70">
    <property type="entry name" value="Aldolase class I"/>
    <property type="match status" value="1"/>
</dbReference>
<dbReference type="Gene3D" id="3.20.140.10">
    <property type="entry name" value="nicotinate phosphoribosyltransferase"/>
    <property type="match status" value="1"/>
</dbReference>
<dbReference type="InterPro" id="IPR013785">
    <property type="entry name" value="Aldolase_TIM"/>
</dbReference>
<dbReference type="InterPro" id="IPR041525">
    <property type="entry name" value="N/Namide_PRibTrfase"/>
</dbReference>
<dbReference type="InterPro" id="IPR040727">
    <property type="entry name" value="NAPRTase_N"/>
</dbReference>
<dbReference type="InterPro" id="IPR007229">
    <property type="entry name" value="Nic_PRibTrfase-Fam"/>
</dbReference>
<dbReference type="InterPro" id="IPR006405">
    <property type="entry name" value="Nic_PRibTrfase_pncB"/>
</dbReference>
<dbReference type="InterPro" id="IPR036068">
    <property type="entry name" value="Nicotinate_pribotase-like_C"/>
</dbReference>
<dbReference type="NCBIfam" id="TIGR01513">
    <property type="entry name" value="NAPRTase_put"/>
    <property type="match status" value="1"/>
</dbReference>
<dbReference type="NCBIfam" id="NF006698">
    <property type="entry name" value="PRK09243.1-5"/>
    <property type="match status" value="1"/>
</dbReference>
<dbReference type="PANTHER" id="PTHR11098">
    <property type="entry name" value="NICOTINATE PHOSPHORIBOSYLTRANSFERASE"/>
    <property type="match status" value="1"/>
</dbReference>
<dbReference type="PANTHER" id="PTHR11098:SF8">
    <property type="entry name" value="NICOTINATE PHOSPHORIBOSYLTRANSFERASE PNCB1"/>
    <property type="match status" value="1"/>
</dbReference>
<dbReference type="Pfam" id="PF04095">
    <property type="entry name" value="NAPRTase"/>
    <property type="match status" value="1"/>
</dbReference>
<dbReference type="Pfam" id="PF17767">
    <property type="entry name" value="NAPRTase_N"/>
    <property type="match status" value="1"/>
</dbReference>
<dbReference type="PIRSF" id="PIRSF000484">
    <property type="entry name" value="NAPRT"/>
    <property type="match status" value="1"/>
</dbReference>
<dbReference type="SUPFAM" id="SSF51690">
    <property type="entry name" value="Nicotinate/Quinolinate PRTase C-terminal domain-like"/>
    <property type="match status" value="1"/>
</dbReference>
<dbReference type="SUPFAM" id="SSF54675">
    <property type="entry name" value="Nicotinate/Quinolinate PRTase N-terminal domain-like"/>
    <property type="match status" value="1"/>
</dbReference>